<protein>
    <recommendedName>
        <fullName>Cytochrome b</fullName>
    </recommendedName>
    <alternativeName>
        <fullName>Complex III subunit 3</fullName>
    </alternativeName>
    <alternativeName>
        <fullName>Complex III subunit III</fullName>
    </alternativeName>
    <alternativeName>
        <fullName>Cytochrome b-c1 complex subunit 3</fullName>
    </alternativeName>
    <alternativeName>
        <fullName>Ubiquinol-cytochrome-c reductase complex cytochrome b subunit</fullName>
    </alternativeName>
</protein>
<evidence type="ECO:0000250" key="1"/>
<evidence type="ECO:0000250" key="2">
    <source>
        <dbReference type="UniProtKB" id="P00157"/>
    </source>
</evidence>
<evidence type="ECO:0000255" key="3">
    <source>
        <dbReference type="PROSITE-ProRule" id="PRU00967"/>
    </source>
</evidence>
<evidence type="ECO:0000255" key="4">
    <source>
        <dbReference type="PROSITE-ProRule" id="PRU00968"/>
    </source>
</evidence>
<organism>
    <name type="scientific">Dipodomys simulans</name>
    <name type="common">Dulzura kangaroo rat</name>
    <dbReference type="NCBI Taxonomy" id="323382"/>
    <lineage>
        <taxon>Eukaryota</taxon>
        <taxon>Metazoa</taxon>
        <taxon>Chordata</taxon>
        <taxon>Craniata</taxon>
        <taxon>Vertebrata</taxon>
        <taxon>Euteleostomi</taxon>
        <taxon>Mammalia</taxon>
        <taxon>Eutheria</taxon>
        <taxon>Euarchontoglires</taxon>
        <taxon>Glires</taxon>
        <taxon>Rodentia</taxon>
        <taxon>Castorimorpha</taxon>
        <taxon>Heteromyidae</taxon>
        <taxon>Dipodomyinae</taxon>
        <taxon>Dipodomys</taxon>
    </lineage>
</organism>
<comment type="function">
    <text evidence="2">Component of the ubiquinol-cytochrome c reductase complex (complex III or cytochrome b-c1 complex) that is part of the mitochondrial respiratory chain. The b-c1 complex mediates electron transfer from ubiquinol to cytochrome c. Contributes to the generation of a proton gradient across the mitochondrial membrane that is then used for ATP synthesis.</text>
</comment>
<comment type="cofactor">
    <cofactor evidence="2">
        <name>heme b</name>
        <dbReference type="ChEBI" id="CHEBI:60344"/>
    </cofactor>
    <text evidence="2">Binds 2 heme b groups non-covalently.</text>
</comment>
<comment type="subunit">
    <text evidence="2">The cytochrome bc1 complex contains 11 subunits: 3 respiratory subunits (MT-CYB, CYC1 and UQCRFS1), 2 core proteins (UQCRC1 and UQCRC2) and 6 low-molecular weight proteins (UQCRH/QCR6, UQCRB/QCR7, UQCRQ/QCR8, UQCR10/QCR9, UQCR11/QCR10 and a cleavage product of UQCRFS1). This cytochrome bc1 complex then forms a dimer.</text>
</comment>
<comment type="subcellular location">
    <subcellularLocation>
        <location evidence="2">Mitochondrion inner membrane</location>
        <topology evidence="2">Multi-pass membrane protein</topology>
    </subcellularLocation>
</comment>
<comment type="miscellaneous">
    <text evidence="1">Heme 1 (or BL or b562) is low-potential and absorbs at about 562 nm, and heme 2 (or BH or b566) is high-potential and absorbs at about 566 nm.</text>
</comment>
<comment type="similarity">
    <text evidence="3 4">Belongs to the cytochrome b family.</text>
</comment>
<comment type="caution">
    <text evidence="2">The full-length protein contains only eight transmembrane helices, not nine as predicted by bioinformatics tools.</text>
</comment>
<reference key="1">
    <citation type="journal article" date="2005" name="J. Mammal.">
        <title>Phylogenetics of the new world rodent family Heteromyidae.</title>
        <authorList>
            <person name="Alexander L.F."/>
            <person name="Riddle B.R."/>
        </authorList>
    </citation>
    <scope>NUCLEOTIDE SEQUENCE [GENOMIC DNA]</scope>
    <source>
        <strain>Isolate LVT 2036</strain>
    </source>
</reference>
<name>CYB_DIPSM</name>
<keyword id="KW-0249">Electron transport</keyword>
<keyword id="KW-0349">Heme</keyword>
<keyword id="KW-0408">Iron</keyword>
<keyword id="KW-0472">Membrane</keyword>
<keyword id="KW-0479">Metal-binding</keyword>
<keyword id="KW-0496">Mitochondrion</keyword>
<keyword id="KW-0999">Mitochondrion inner membrane</keyword>
<keyword id="KW-0679">Respiratory chain</keyword>
<keyword id="KW-0812">Transmembrane</keyword>
<keyword id="KW-1133">Transmembrane helix</keyword>
<keyword id="KW-0813">Transport</keyword>
<keyword id="KW-0830">Ubiquinone</keyword>
<accession>Q508N6</accession>
<dbReference type="EMBL" id="AY926367">
    <property type="protein sequence ID" value="AAY23210.1"/>
    <property type="molecule type" value="Genomic_DNA"/>
</dbReference>
<dbReference type="GO" id="GO:0005743">
    <property type="term" value="C:mitochondrial inner membrane"/>
    <property type="evidence" value="ECO:0007669"/>
    <property type="project" value="UniProtKB-SubCell"/>
</dbReference>
<dbReference type="GO" id="GO:0045275">
    <property type="term" value="C:respiratory chain complex III"/>
    <property type="evidence" value="ECO:0007669"/>
    <property type="project" value="InterPro"/>
</dbReference>
<dbReference type="GO" id="GO:0046872">
    <property type="term" value="F:metal ion binding"/>
    <property type="evidence" value="ECO:0007669"/>
    <property type="project" value="UniProtKB-KW"/>
</dbReference>
<dbReference type="GO" id="GO:0008121">
    <property type="term" value="F:ubiquinol-cytochrome-c reductase activity"/>
    <property type="evidence" value="ECO:0007669"/>
    <property type="project" value="InterPro"/>
</dbReference>
<dbReference type="GO" id="GO:0006122">
    <property type="term" value="P:mitochondrial electron transport, ubiquinol to cytochrome c"/>
    <property type="evidence" value="ECO:0007669"/>
    <property type="project" value="TreeGrafter"/>
</dbReference>
<dbReference type="CDD" id="cd00290">
    <property type="entry name" value="cytochrome_b_C"/>
    <property type="match status" value="1"/>
</dbReference>
<dbReference type="CDD" id="cd00284">
    <property type="entry name" value="Cytochrome_b_N"/>
    <property type="match status" value="1"/>
</dbReference>
<dbReference type="FunFam" id="1.20.810.10:FF:000002">
    <property type="entry name" value="Cytochrome b"/>
    <property type="match status" value="1"/>
</dbReference>
<dbReference type="Gene3D" id="1.20.810.10">
    <property type="entry name" value="Cytochrome Bc1 Complex, Chain C"/>
    <property type="match status" value="1"/>
</dbReference>
<dbReference type="InterPro" id="IPR005798">
    <property type="entry name" value="Cyt_b/b6_C"/>
</dbReference>
<dbReference type="InterPro" id="IPR036150">
    <property type="entry name" value="Cyt_b/b6_C_sf"/>
</dbReference>
<dbReference type="InterPro" id="IPR005797">
    <property type="entry name" value="Cyt_b/b6_N"/>
</dbReference>
<dbReference type="InterPro" id="IPR027387">
    <property type="entry name" value="Cytb/b6-like_sf"/>
</dbReference>
<dbReference type="InterPro" id="IPR030689">
    <property type="entry name" value="Cytochrome_b"/>
</dbReference>
<dbReference type="InterPro" id="IPR048260">
    <property type="entry name" value="Cytochrome_b_C_euk/bac"/>
</dbReference>
<dbReference type="InterPro" id="IPR048259">
    <property type="entry name" value="Cytochrome_b_N_euk/bac"/>
</dbReference>
<dbReference type="InterPro" id="IPR016174">
    <property type="entry name" value="Di-haem_cyt_TM"/>
</dbReference>
<dbReference type="PANTHER" id="PTHR19271">
    <property type="entry name" value="CYTOCHROME B"/>
    <property type="match status" value="1"/>
</dbReference>
<dbReference type="PANTHER" id="PTHR19271:SF16">
    <property type="entry name" value="CYTOCHROME B"/>
    <property type="match status" value="1"/>
</dbReference>
<dbReference type="Pfam" id="PF00032">
    <property type="entry name" value="Cytochrom_B_C"/>
    <property type="match status" value="1"/>
</dbReference>
<dbReference type="Pfam" id="PF00033">
    <property type="entry name" value="Cytochrome_B"/>
    <property type="match status" value="1"/>
</dbReference>
<dbReference type="PIRSF" id="PIRSF038885">
    <property type="entry name" value="COB"/>
    <property type="match status" value="1"/>
</dbReference>
<dbReference type="SUPFAM" id="SSF81648">
    <property type="entry name" value="a domain/subunit of cytochrome bc1 complex (Ubiquinol-cytochrome c reductase)"/>
    <property type="match status" value="1"/>
</dbReference>
<dbReference type="SUPFAM" id="SSF81342">
    <property type="entry name" value="Transmembrane di-heme cytochromes"/>
    <property type="match status" value="1"/>
</dbReference>
<dbReference type="PROSITE" id="PS51003">
    <property type="entry name" value="CYTB_CTER"/>
    <property type="match status" value="1"/>
</dbReference>
<dbReference type="PROSITE" id="PS51002">
    <property type="entry name" value="CYTB_NTER"/>
    <property type="match status" value="1"/>
</dbReference>
<sequence length="379" mass="42936">MTIMRKTHPLMKMVNHAFIDLPTPANISGWWNFGSLLGLCLVIQIASGLFLAMHYTPDTMTAFSSVTHICRDVNYGWLIRYMHANGASLFFICLYLHIGRGIYYGSYSYLETWNIGIILLFLTMATVFMGYVLPWGQMSFWGATVITNLLSAIPYIGTDLVEWIWGGFSVDKATLNRFFAFHFILPFIIAAMAMVHLLFLHETGSNNPLGIPSDCDKIPFHPYYTTKDFLGIVLLLAFFFTMVXFFPDLLGDPDNYSPANPLNTPPHIKPEWYFLFAYAILRSIPNKLGGVIALVMSILVLALLPHIQTSKQRSLMFRPISQFLFWLLVADVLILTWIGGQPVEPPFIIIGQIASLLYFTIILALMPIAGIIENKMLKW</sequence>
<geneLocation type="mitochondrion"/>
<gene>
    <name type="primary">MT-CYB</name>
    <name type="synonym">COB</name>
    <name type="synonym">CYTB</name>
    <name type="synonym">MTCYB</name>
</gene>
<proteinExistence type="inferred from homology"/>
<feature type="chain" id="PRO_0000255045" description="Cytochrome b">
    <location>
        <begin position="1"/>
        <end position="379"/>
    </location>
</feature>
<feature type="transmembrane region" description="Helical" evidence="2">
    <location>
        <begin position="33"/>
        <end position="53"/>
    </location>
</feature>
<feature type="transmembrane region" description="Helical" evidence="2">
    <location>
        <begin position="77"/>
        <end position="98"/>
    </location>
</feature>
<feature type="transmembrane region" description="Helical" evidence="2">
    <location>
        <begin position="113"/>
        <end position="133"/>
    </location>
</feature>
<feature type="transmembrane region" description="Helical" evidence="2">
    <location>
        <begin position="178"/>
        <end position="198"/>
    </location>
</feature>
<feature type="transmembrane region" description="Helical" evidence="2">
    <location>
        <begin position="226"/>
        <end position="246"/>
    </location>
</feature>
<feature type="transmembrane region" description="Helical" evidence="2">
    <location>
        <begin position="288"/>
        <end position="308"/>
    </location>
</feature>
<feature type="transmembrane region" description="Helical" evidence="2">
    <location>
        <begin position="320"/>
        <end position="340"/>
    </location>
</feature>
<feature type="transmembrane region" description="Helical" evidence="2">
    <location>
        <begin position="347"/>
        <end position="367"/>
    </location>
</feature>
<feature type="binding site" description="axial binding residue" evidence="2">
    <location>
        <position position="83"/>
    </location>
    <ligand>
        <name>heme b</name>
        <dbReference type="ChEBI" id="CHEBI:60344"/>
        <label>b562</label>
    </ligand>
    <ligandPart>
        <name>Fe</name>
        <dbReference type="ChEBI" id="CHEBI:18248"/>
    </ligandPart>
</feature>
<feature type="binding site" description="axial binding residue" evidence="2">
    <location>
        <position position="97"/>
    </location>
    <ligand>
        <name>heme b</name>
        <dbReference type="ChEBI" id="CHEBI:60344"/>
        <label>b566</label>
    </ligand>
    <ligandPart>
        <name>Fe</name>
        <dbReference type="ChEBI" id="CHEBI:18248"/>
    </ligandPart>
</feature>
<feature type="binding site" description="axial binding residue" evidence="2">
    <location>
        <position position="182"/>
    </location>
    <ligand>
        <name>heme b</name>
        <dbReference type="ChEBI" id="CHEBI:60344"/>
        <label>b562</label>
    </ligand>
    <ligandPart>
        <name>Fe</name>
        <dbReference type="ChEBI" id="CHEBI:18248"/>
    </ligandPart>
</feature>
<feature type="binding site" description="axial binding residue" evidence="2">
    <location>
        <position position="196"/>
    </location>
    <ligand>
        <name>heme b</name>
        <dbReference type="ChEBI" id="CHEBI:60344"/>
        <label>b566</label>
    </ligand>
    <ligandPart>
        <name>Fe</name>
        <dbReference type="ChEBI" id="CHEBI:18248"/>
    </ligandPart>
</feature>
<feature type="binding site" evidence="2">
    <location>
        <position position="201"/>
    </location>
    <ligand>
        <name>a ubiquinone</name>
        <dbReference type="ChEBI" id="CHEBI:16389"/>
    </ligand>
</feature>